<evidence type="ECO:0000250" key="1"/>
<evidence type="ECO:0000250" key="2">
    <source>
        <dbReference type="UniProtKB" id="P00157"/>
    </source>
</evidence>
<evidence type="ECO:0000255" key="3">
    <source>
        <dbReference type="PROSITE-ProRule" id="PRU00967"/>
    </source>
</evidence>
<evidence type="ECO:0000255" key="4">
    <source>
        <dbReference type="PROSITE-ProRule" id="PRU00968"/>
    </source>
</evidence>
<comment type="function">
    <text evidence="2">Component of the ubiquinol-cytochrome c reductase complex (complex III or cytochrome b-c1 complex) that is part of the mitochondrial respiratory chain. The b-c1 complex mediates electron transfer from ubiquinol to cytochrome c. Contributes to the generation of a proton gradient across the mitochondrial membrane that is then used for ATP synthesis.</text>
</comment>
<comment type="cofactor">
    <cofactor evidence="2">
        <name>heme b</name>
        <dbReference type="ChEBI" id="CHEBI:60344"/>
    </cofactor>
    <text evidence="2">Binds 2 heme b groups non-covalently.</text>
</comment>
<comment type="subunit">
    <text evidence="2">The cytochrome bc1 complex contains 11 subunits: 3 respiratory subunits (MT-CYB, CYC1 and UQCRFS1), 2 core proteins (UQCRC1 and UQCRC2) and 6 low-molecular weight proteins (UQCRH/QCR6, UQCRB/QCR7, UQCRQ/QCR8, UQCR10/QCR9, UQCR11/QCR10 and a cleavage product of UQCRFS1). This cytochrome bc1 complex then forms a dimer.</text>
</comment>
<comment type="subcellular location">
    <subcellularLocation>
        <location evidence="2">Mitochondrion inner membrane</location>
        <topology evidence="2">Multi-pass membrane protein</topology>
    </subcellularLocation>
</comment>
<comment type="miscellaneous">
    <text evidence="1">Heme 1 (or BL or b562) is low-potential and absorbs at about 562 nm, and heme 2 (or BH or b566) is high-potential and absorbs at about 566 nm.</text>
</comment>
<comment type="similarity">
    <text evidence="3 4">Belongs to the cytochrome b family.</text>
</comment>
<comment type="caution">
    <text evidence="2">The full-length protein contains only eight transmembrane helices, not nine as predicted by bioinformatics tools.</text>
</comment>
<protein>
    <recommendedName>
        <fullName>Cytochrome b</fullName>
    </recommendedName>
    <alternativeName>
        <fullName>Complex III subunit 3</fullName>
    </alternativeName>
    <alternativeName>
        <fullName>Complex III subunit III</fullName>
    </alternativeName>
    <alternativeName>
        <fullName>Cytochrome b-c1 complex subunit 3</fullName>
    </alternativeName>
    <alternativeName>
        <fullName>Ubiquinol-cytochrome-c reductase complex cytochrome b subunit</fullName>
    </alternativeName>
</protein>
<name>CYB_COLGU</name>
<reference key="1">
    <citation type="journal article" date="2005" name="J. Hum. Evol.">
        <title>Catarrhine primate divergence dates estimated from complete mitochondrial genomes: concordance with fossil and nuclear DNA evidence.</title>
        <authorList>
            <person name="Raaum R.L."/>
            <person name="Sterner K.N."/>
            <person name="Noviello C.M."/>
            <person name="Stewart C.-B.R."/>
            <person name="Disotell T.R."/>
        </authorList>
    </citation>
    <scope>NUCLEOTIDE SEQUENCE [GENOMIC DNA]</scope>
</reference>
<feature type="chain" id="PRO_0000254791" description="Cytochrome b">
    <location>
        <begin position="1"/>
        <end position="380"/>
    </location>
</feature>
<feature type="transmembrane region" description="Helical" evidence="2">
    <location>
        <begin position="33"/>
        <end position="53"/>
    </location>
</feature>
<feature type="transmembrane region" description="Helical" evidence="2">
    <location>
        <begin position="77"/>
        <end position="98"/>
    </location>
</feature>
<feature type="transmembrane region" description="Helical" evidence="2">
    <location>
        <begin position="113"/>
        <end position="133"/>
    </location>
</feature>
<feature type="transmembrane region" description="Helical" evidence="2">
    <location>
        <begin position="178"/>
        <end position="198"/>
    </location>
</feature>
<feature type="transmembrane region" description="Helical" evidence="2">
    <location>
        <begin position="226"/>
        <end position="246"/>
    </location>
</feature>
<feature type="transmembrane region" description="Helical" evidence="2">
    <location>
        <begin position="288"/>
        <end position="308"/>
    </location>
</feature>
<feature type="transmembrane region" description="Helical" evidence="2">
    <location>
        <begin position="320"/>
        <end position="340"/>
    </location>
</feature>
<feature type="transmembrane region" description="Helical" evidence="2">
    <location>
        <begin position="347"/>
        <end position="367"/>
    </location>
</feature>
<feature type="binding site" description="axial binding residue" evidence="2">
    <location>
        <position position="83"/>
    </location>
    <ligand>
        <name>heme b</name>
        <dbReference type="ChEBI" id="CHEBI:60344"/>
        <label>b562</label>
    </ligand>
    <ligandPart>
        <name>Fe</name>
        <dbReference type="ChEBI" id="CHEBI:18248"/>
    </ligandPart>
</feature>
<feature type="binding site" description="axial binding residue" evidence="2">
    <location>
        <position position="97"/>
    </location>
    <ligand>
        <name>heme b</name>
        <dbReference type="ChEBI" id="CHEBI:60344"/>
        <label>b566</label>
    </ligand>
    <ligandPart>
        <name>Fe</name>
        <dbReference type="ChEBI" id="CHEBI:18248"/>
    </ligandPart>
</feature>
<feature type="binding site" description="axial binding residue" evidence="2">
    <location>
        <position position="182"/>
    </location>
    <ligand>
        <name>heme b</name>
        <dbReference type="ChEBI" id="CHEBI:60344"/>
        <label>b562</label>
    </ligand>
    <ligandPart>
        <name>Fe</name>
        <dbReference type="ChEBI" id="CHEBI:18248"/>
    </ligandPart>
</feature>
<feature type="binding site" description="axial binding residue" evidence="2">
    <location>
        <position position="196"/>
    </location>
    <ligand>
        <name>heme b</name>
        <dbReference type="ChEBI" id="CHEBI:60344"/>
        <label>b566</label>
    </ligand>
    <ligandPart>
        <name>Fe</name>
        <dbReference type="ChEBI" id="CHEBI:18248"/>
    </ligandPart>
</feature>
<feature type="binding site" evidence="2">
    <location>
        <position position="201"/>
    </location>
    <ligand>
        <name>a ubiquinone</name>
        <dbReference type="ChEBI" id="CHEBI:16389"/>
    </ligand>
</feature>
<keyword id="KW-0249">Electron transport</keyword>
<keyword id="KW-0349">Heme</keyword>
<keyword id="KW-0408">Iron</keyword>
<keyword id="KW-0472">Membrane</keyword>
<keyword id="KW-0479">Metal-binding</keyword>
<keyword id="KW-0496">Mitochondrion</keyword>
<keyword id="KW-0999">Mitochondrion inner membrane</keyword>
<keyword id="KW-0679">Respiratory chain</keyword>
<keyword id="KW-0812">Transmembrane</keyword>
<keyword id="KW-1133">Transmembrane helix</keyword>
<keyword id="KW-0813">Transport</keyword>
<keyword id="KW-0830">Ubiquinone</keyword>
<organism>
    <name type="scientific">Colobus guereza</name>
    <name type="common">Mantled guereza</name>
    <name type="synonym">Eastern black-and-white colobus monkey</name>
    <dbReference type="NCBI Taxonomy" id="33548"/>
    <lineage>
        <taxon>Eukaryota</taxon>
        <taxon>Metazoa</taxon>
        <taxon>Chordata</taxon>
        <taxon>Craniata</taxon>
        <taxon>Vertebrata</taxon>
        <taxon>Euteleostomi</taxon>
        <taxon>Mammalia</taxon>
        <taxon>Eutheria</taxon>
        <taxon>Euarchontoglires</taxon>
        <taxon>Primates</taxon>
        <taxon>Haplorrhini</taxon>
        <taxon>Catarrhini</taxon>
        <taxon>Cercopithecidae</taxon>
        <taxon>Colobinae</taxon>
        <taxon>Colobus</taxon>
    </lineage>
</organism>
<accession>Q5BU73</accession>
<geneLocation type="mitochondrion"/>
<proteinExistence type="inferred from homology"/>
<dbReference type="EMBL" id="AY863427">
    <property type="protein sequence ID" value="AAX19345.1"/>
    <property type="molecule type" value="Genomic_DNA"/>
</dbReference>
<dbReference type="RefSeq" id="YP_214965.1">
    <property type="nucleotide sequence ID" value="NC_006901.1"/>
</dbReference>
<dbReference type="SMR" id="Q5BU73"/>
<dbReference type="GeneID" id="3332143"/>
<dbReference type="CTD" id="4519"/>
<dbReference type="GO" id="GO:0005743">
    <property type="term" value="C:mitochondrial inner membrane"/>
    <property type="evidence" value="ECO:0007669"/>
    <property type="project" value="UniProtKB-SubCell"/>
</dbReference>
<dbReference type="GO" id="GO:0045275">
    <property type="term" value="C:respiratory chain complex III"/>
    <property type="evidence" value="ECO:0007669"/>
    <property type="project" value="InterPro"/>
</dbReference>
<dbReference type="GO" id="GO:0046872">
    <property type="term" value="F:metal ion binding"/>
    <property type="evidence" value="ECO:0007669"/>
    <property type="project" value="UniProtKB-KW"/>
</dbReference>
<dbReference type="GO" id="GO:0008121">
    <property type="term" value="F:ubiquinol-cytochrome-c reductase activity"/>
    <property type="evidence" value="ECO:0007669"/>
    <property type="project" value="InterPro"/>
</dbReference>
<dbReference type="GO" id="GO:0006122">
    <property type="term" value="P:mitochondrial electron transport, ubiquinol to cytochrome c"/>
    <property type="evidence" value="ECO:0007669"/>
    <property type="project" value="TreeGrafter"/>
</dbReference>
<dbReference type="CDD" id="cd00290">
    <property type="entry name" value="cytochrome_b_C"/>
    <property type="match status" value="1"/>
</dbReference>
<dbReference type="CDD" id="cd00284">
    <property type="entry name" value="Cytochrome_b_N"/>
    <property type="match status" value="1"/>
</dbReference>
<dbReference type="FunFam" id="1.20.810.10:FF:000002">
    <property type="entry name" value="Cytochrome b"/>
    <property type="match status" value="1"/>
</dbReference>
<dbReference type="Gene3D" id="1.20.810.10">
    <property type="entry name" value="Cytochrome Bc1 Complex, Chain C"/>
    <property type="match status" value="1"/>
</dbReference>
<dbReference type="InterPro" id="IPR005798">
    <property type="entry name" value="Cyt_b/b6_C"/>
</dbReference>
<dbReference type="InterPro" id="IPR036150">
    <property type="entry name" value="Cyt_b/b6_C_sf"/>
</dbReference>
<dbReference type="InterPro" id="IPR005797">
    <property type="entry name" value="Cyt_b/b6_N"/>
</dbReference>
<dbReference type="InterPro" id="IPR027387">
    <property type="entry name" value="Cytb/b6-like_sf"/>
</dbReference>
<dbReference type="InterPro" id="IPR030689">
    <property type="entry name" value="Cytochrome_b"/>
</dbReference>
<dbReference type="InterPro" id="IPR048260">
    <property type="entry name" value="Cytochrome_b_C_euk/bac"/>
</dbReference>
<dbReference type="InterPro" id="IPR048259">
    <property type="entry name" value="Cytochrome_b_N_euk/bac"/>
</dbReference>
<dbReference type="InterPro" id="IPR016174">
    <property type="entry name" value="Di-haem_cyt_TM"/>
</dbReference>
<dbReference type="PANTHER" id="PTHR19271">
    <property type="entry name" value="CYTOCHROME B"/>
    <property type="match status" value="1"/>
</dbReference>
<dbReference type="PANTHER" id="PTHR19271:SF16">
    <property type="entry name" value="CYTOCHROME B"/>
    <property type="match status" value="1"/>
</dbReference>
<dbReference type="Pfam" id="PF00032">
    <property type="entry name" value="Cytochrom_B_C"/>
    <property type="match status" value="1"/>
</dbReference>
<dbReference type="Pfam" id="PF00033">
    <property type="entry name" value="Cytochrome_B"/>
    <property type="match status" value="1"/>
</dbReference>
<dbReference type="PIRSF" id="PIRSF038885">
    <property type="entry name" value="COB"/>
    <property type="match status" value="1"/>
</dbReference>
<dbReference type="SUPFAM" id="SSF81648">
    <property type="entry name" value="a domain/subunit of cytochrome bc1 complex (Ubiquinol-cytochrome c reductase)"/>
    <property type="match status" value="1"/>
</dbReference>
<dbReference type="SUPFAM" id="SSF81342">
    <property type="entry name" value="Transmembrane di-heme cytochromes"/>
    <property type="match status" value="1"/>
</dbReference>
<dbReference type="PROSITE" id="PS51003">
    <property type="entry name" value="CYTB_CTER"/>
    <property type="match status" value="1"/>
</dbReference>
<dbReference type="PROSITE" id="PS51002">
    <property type="entry name" value="CYTB_NTER"/>
    <property type="match status" value="1"/>
</dbReference>
<gene>
    <name type="primary">MT-CYB</name>
    <name type="synonym">COB</name>
    <name type="synonym">CYTB</name>
    <name type="synonym">MTCYB</name>
</gene>
<sequence length="380" mass="42928">MTSTRKSNPIMKMVNHAFIDLPTPSNISMWWNFGSLLATCLLLQIITGLFLAMHYSPDTSSAFSSIAHITRDVNYGWIIRYLHANGASMFFICLFLHVGRGLYYGSFLLLETWNIGILLLLTVMATAFMGYVLPWGQMSFWGATVITNLLSAIPYIGTDLVQWVWGGYSIDKPTLTRFFTIHFTLPFIIVALTTLHLLFLHETGSNNPCGIISNSDKIPFHPYYTTKDILGLTLLLLLLMMLVLFLPDLLSDPDNYTPANPLSTPPHIKPEWYFLFAYAILRSVPNKLGGVLALLLSILILMAMPMLHKSKQQSMTFRPLSQLMLWLLTTTLITLTWIGSQPVNQPFIMIGQMASMTYFTTILILMPLASLTENKLLKWT</sequence>